<sequence length="416" mass="45814">MSTPLQGIKVLDFTGVQSGPSCTQMLAWFGADVIKIERPGVGDVTRHQLRDIPDIDALYFTMLNSNKRSIELNTKTAEGKEVMEKLIREADILVENFHPGAIDHMGFTWEHIQEINPRLIFGSIKGFDECSPYVNVKAYENVAQAAGGAASTTGFWDGPPLVSAAALGDSNTGMHLLIGLLAALLHREKTGRGQRVTMSMQDAVLNLCRVKLRDQQRLDKLGYLEEYPQYPNGTFGDAVPRGGNAGGGGQPGWILKCKGWETDPNAYIYFTIQEQNWENTCKAIGKPDWITDPAYSTAHARQPHIFDIFAEIEKYTVTIDKHEAVAYLTQFDIPCAPVLSMKEISLDPSLRQSGSVVEVEQPLRGKYLTVGCPMKFSAFTPDIKAAPLLGEHTAAVLQELGYSDDEIAAMKQNHAI</sequence>
<comment type="function">
    <text evidence="1">Involved in the catabolism of oxalate and in the adapatation to low pH via the induction of the oxalate-dependent acid tolerance response (ATR). Catalyzes the transfer of the CoA moiety from formyl-CoA to oxalate (By similarity).</text>
</comment>
<comment type="catalytic activity">
    <reaction evidence="2">
        <text>formyl-CoA + oxalate = oxalyl-CoA + formate</text>
        <dbReference type="Rhea" id="RHEA:16545"/>
        <dbReference type="ChEBI" id="CHEBI:15740"/>
        <dbReference type="ChEBI" id="CHEBI:30623"/>
        <dbReference type="ChEBI" id="CHEBI:57376"/>
        <dbReference type="ChEBI" id="CHEBI:57388"/>
        <dbReference type="EC" id="2.8.3.16"/>
    </reaction>
</comment>
<comment type="pathway">
    <text evidence="2">Metabolic intermediate degradation; oxalate degradation; CO(2) and formate from oxalate: step 1/2.</text>
</comment>
<comment type="subunit">
    <text evidence="2">Homodimer.</text>
</comment>
<comment type="similarity">
    <text evidence="2">Belongs to the CoA-transferase III family. Frc subfamily.</text>
</comment>
<evidence type="ECO:0000250" key="1"/>
<evidence type="ECO:0000255" key="2">
    <source>
        <dbReference type="HAMAP-Rule" id="MF_00742"/>
    </source>
</evidence>
<accession>B7N5X4</accession>
<organism>
    <name type="scientific">Escherichia coli O17:K52:H18 (strain UMN026 / ExPEC)</name>
    <dbReference type="NCBI Taxonomy" id="585056"/>
    <lineage>
        <taxon>Bacteria</taxon>
        <taxon>Pseudomonadati</taxon>
        <taxon>Pseudomonadota</taxon>
        <taxon>Gammaproteobacteria</taxon>
        <taxon>Enterobacterales</taxon>
        <taxon>Enterobacteriaceae</taxon>
        <taxon>Escherichia</taxon>
    </lineage>
</organism>
<name>FCTA_ECOLU</name>
<proteinExistence type="inferred from homology"/>
<dbReference type="EC" id="2.8.3.16" evidence="2"/>
<dbReference type="EMBL" id="CU928163">
    <property type="protein sequence ID" value="CAR13883.1"/>
    <property type="molecule type" value="Genomic_DNA"/>
</dbReference>
<dbReference type="RefSeq" id="WP_000106757.1">
    <property type="nucleotide sequence ID" value="NC_011751.1"/>
</dbReference>
<dbReference type="RefSeq" id="YP_002413410.1">
    <property type="nucleotide sequence ID" value="NC_011751.1"/>
</dbReference>
<dbReference type="SMR" id="B7N5X4"/>
<dbReference type="STRING" id="585056.ECUMN_2703"/>
<dbReference type="KEGG" id="eum:ECUMN_2703"/>
<dbReference type="PATRIC" id="fig|585056.7.peg.2885"/>
<dbReference type="HOGENOM" id="CLU_033975_2_1_6"/>
<dbReference type="UniPathway" id="UPA00540">
    <property type="reaction ID" value="UER00598"/>
</dbReference>
<dbReference type="Proteomes" id="UP000007097">
    <property type="component" value="Chromosome"/>
</dbReference>
<dbReference type="GO" id="GO:0033608">
    <property type="term" value="F:formyl-CoA transferase activity"/>
    <property type="evidence" value="ECO:0007669"/>
    <property type="project" value="UniProtKB-EC"/>
</dbReference>
<dbReference type="GO" id="GO:0033611">
    <property type="term" value="P:oxalate catabolic process"/>
    <property type="evidence" value="ECO:0007669"/>
    <property type="project" value="UniProtKB-UniRule"/>
</dbReference>
<dbReference type="Gene3D" id="3.40.50.10540">
    <property type="entry name" value="Crotonobetainyl-coa:carnitine coa-transferase, domain 1"/>
    <property type="match status" value="1"/>
</dbReference>
<dbReference type="Gene3D" id="3.30.1540.10">
    <property type="entry name" value="formyl-coa transferase, domain 3"/>
    <property type="match status" value="1"/>
</dbReference>
<dbReference type="HAMAP" id="MF_00742">
    <property type="entry name" value="Formyl_CoA_transfer"/>
    <property type="match status" value="1"/>
</dbReference>
<dbReference type="InterPro" id="IPR050483">
    <property type="entry name" value="CoA-transferase_III_domain"/>
</dbReference>
<dbReference type="InterPro" id="IPR003673">
    <property type="entry name" value="CoA-Trfase_fam_III"/>
</dbReference>
<dbReference type="InterPro" id="IPR044855">
    <property type="entry name" value="CoA-Trfase_III_dom3_sf"/>
</dbReference>
<dbReference type="InterPro" id="IPR023606">
    <property type="entry name" value="CoA-Trfase_III_dom_1_sf"/>
</dbReference>
<dbReference type="InterPro" id="IPR017659">
    <property type="entry name" value="Formyl_CoA_transfer"/>
</dbReference>
<dbReference type="NCBIfam" id="TIGR03253">
    <property type="entry name" value="oxalate_frc"/>
    <property type="match status" value="1"/>
</dbReference>
<dbReference type="NCBIfam" id="NF003809">
    <property type="entry name" value="PRK05398.1"/>
    <property type="match status" value="1"/>
</dbReference>
<dbReference type="PANTHER" id="PTHR48207">
    <property type="entry name" value="SUCCINATE--HYDROXYMETHYLGLUTARATE COA-TRANSFERASE"/>
    <property type="match status" value="1"/>
</dbReference>
<dbReference type="PANTHER" id="PTHR48207:SF3">
    <property type="entry name" value="SUCCINATE--HYDROXYMETHYLGLUTARATE COA-TRANSFERASE"/>
    <property type="match status" value="1"/>
</dbReference>
<dbReference type="Pfam" id="PF02515">
    <property type="entry name" value="CoA_transf_3"/>
    <property type="match status" value="1"/>
</dbReference>
<dbReference type="SUPFAM" id="SSF89796">
    <property type="entry name" value="CoA-transferase family III (CaiB/BaiF)"/>
    <property type="match status" value="1"/>
</dbReference>
<gene>
    <name evidence="2" type="primary">frc</name>
    <name type="ordered locus">ECUMN_2703</name>
</gene>
<keyword id="KW-0808">Transferase</keyword>
<reference key="1">
    <citation type="journal article" date="2009" name="PLoS Genet.">
        <title>Organised genome dynamics in the Escherichia coli species results in highly diverse adaptive paths.</title>
        <authorList>
            <person name="Touchon M."/>
            <person name="Hoede C."/>
            <person name="Tenaillon O."/>
            <person name="Barbe V."/>
            <person name="Baeriswyl S."/>
            <person name="Bidet P."/>
            <person name="Bingen E."/>
            <person name="Bonacorsi S."/>
            <person name="Bouchier C."/>
            <person name="Bouvet O."/>
            <person name="Calteau A."/>
            <person name="Chiapello H."/>
            <person name="Clermont O."/>
            <person name="Cruveiller S."/>
            <person name="Danchin A."/>
            <person name="Diard M."/>
            <person name="Dossat C."/>
            <person name="Karoui M.E."/>
            <person name="Frapy E."/>
            <person name="Garry L."/>
            <person name="Ghigo J.M."/>
            <person name="Gilles A.M."/>
            <person name="Johnson J."/>
            <person name="Le Bouguenec C."/>
            <person name="Lescat M."/>
            <person name="Mangenot S."/>
            <person name="Martinez-Jehanne V."/>
            <person name="Matic I."/>
            <person name="Nassif X."/>
            <person name="Oztas S."/>
            <person name="Petit M.A."/>
            <person name="Pichon C."/>
            <person name="Rouy Z."/>
            <person name="Ruf C.S."/>
            <person name="Schneider D."/>
            <person name="Tourret J."/>
            <person name="Vacherie B."/>
            <person name="Vallenet D."/>
            <person name="Medigue C."/>
            <person name="Rocha E.P.C."/>
            <person name="Denamur E."/>
        </authorList>
    </citation>
    <scope>NUCLEOTIDE SEQUENCE [LARGE SCALE GENOMIC DNA]</scope>
    <source>
        <strain>UMN026 / ExPEC</strain>
    </source>
</reference>
<protein>
    <recommendedName>
        <fullName>Formyl-CoA:oxalate CoA-transferase</fullName>
        <shortName>FCOCT</shortName>
        <ecNumber evidence="2">2.8.3.16</ecNumber>
    </recommendedName>
    <alternativeName>
        <fullName evidence="2">Formyl-coenzyme A transferase</fullName>
        <shortName evidence="2">Formyl-CoA transferase</shortName>
    </alternativeName>
</protein>
<feature type="chain" id="PRO_1000189581" description="Formyl-CoA:oxalate CoA-transferase">
    <location>
        <begin position="1"/>
        <end position="416"/>
    </location>
</feature>
<feature type="active site" description="Nucleophile" evidence="2">
    <location>
        <position position="169"/>
    </location>
</feature>
<feature type="binding site" evidence="1">
    <location>
        <begin position="17"/>
        <end position="18"/>
    </location>
    <ligand>
        <name>CoA</name>
        <dbReference type="ChEBI" id="CHEBI:57287"/>
    </ligand>
</feature>
<feature type="binding site" evidence="2">
    <location>
        <position position="38"/>
    </location>
    <ligand>
        <name>CoA</name>
        <dbReference type="ChEBI" id="CHEBI:57287"/>
    </ligand>
</feature>
<feature type="binding site" evidence="1">
    <location>
        <begin position="72"/>
        <end position="75"/>
    </location>
    <ligand>
        <name>CoA</name>
        <dbReference type="ChEBI" id="CHEBI:57287"/>
    </ligand>
</feature>
<feature type="binding site" evidence="1">
    <location>
        <begin position="96"/>
        <end position="98"/>
    </location>
    <ligand>
        <name>CoA</name>
        <dbReference type="ChEBI" id="CHEBI:57287"/>
    </ligand>
</feature>
<feature type="binding site" evidence="2">
    <location>
        <position position="104"/>
    </location>
    <ligand>
        <name>CoA</name>
        <dbReference type="ChEBI" id="CHEBI:57287"/>
    </ligand>
</feature>
<feature type="binding site" evidence="1">
    <location>
        <begin position="137"/>
        <end position="140"/>
    </location>
    <ligand>
        <name>CoA</name>
        <dbReference type="ChEBI" id="CHEBI:57287"/>
    </ligand>
</feature>
<feature type="binding site" evidence="1">
    <location>
        <begin position="248"/>
        <end position="250"/>
    </location>
    <ligand>
        <name>substrate</name>
    </ligand>
</feature>
<feature type="binding site" evidence="1">
    <location>
        <begin position="273"/>
        <end position="275"/>
    </location>
    <ligand>
        <name>CoA</name>
        <dbReference type="ChEBI" id="CHEBI:57287"/>
    </ligand>
</feature>